<reference key="1">
    <citation type="journal article" date="2007" name="Genome Res.">
        <title>Reductive evolution and niche adaptation inferred from the genome of Mycobacterium ulcerans, the causative agent of Buruli ulcer.</title>
        <authorList>
            <person name="Stinear T.P."/>
            <person name="Seemann T."/>
            <person name="Pidot S."/>
            <person name="Frigui W."/>
            <person name="Reysset G."/>
            <person name="Garnier T."/>
            <person name="Meurice G."/>
            <person name="Simon D."/>
            <person name="Bouchier C."/>
            <person name="Ma L."/>
            <person name="Tichit M."/>
            <person name="Porter J.L."/>
            <person name="Ryan J."/>
            <person name="Johnson P.D.R."/>
            <person name="Davies J.K."/>
            <person name="Jenkin G.A."/>
            <person name="Small P.L.C."/>
            <person name="Jones L.M."/>
            <person name="Tekaia F."/>
            <person name="Laval F."/>
            <person name="Daffe M."/>
            <person name="Parkhill J."/>
            <person name="Cole S.T."/>
        </authorList>
    </citation>
    <scope>NUCLEOTIDE SEQUENCE [LARGE SCALE GENOMIC DNA]</scope>
    <source>
        <strain>Agy99</strain>
    </source>
</reference>
<reference key="2">
    <citation type="journal article" date="2016" name="FEBS Lett.">
        <title>Mycofactocin biosynthesis: modification of the peptide MftA by the radical S-adenosylmethionine protein MftC.</title>
        <authorList>
            <person name="Khaliullin B."/>
            <person name="Aggarwal P."/>
            <person name="Bubas M."/>
            <person name="Eaton G.R."/>
            <person name="Eaton S.S."/>
            <person name="Latham J.A."/>
        </authorList>
    </citation>
    <scope>FUNCTION</scope>
    <scope>CATALYTIC ACTIVITY</scope>
    <scope>COFACTOR</scope>
    <scope>INTERACTION WITH MFTB</scope>
</reference>
<reference key="3">
    <citation type="journal article" date="2017" name="J. Biol. Chem.">
        <title>Mechanistic elucidation of the mycofactocin-biosynthetic radical S-adenosylmethionine protein, MftC.</title>
        <authorList>
            <person name="Khaliullin B."/>
            <person name="Ayikpoe R."/>
            <person name="Tuttle M."/>
            <person name="Latham J.A."/>
        </authorList>
    </citation>
    <scope>FUNCTION</scope>
    <scope>CATALYTIC ACTIVITY</scope>
    <scope>REACTION MECHANISM</scope>
    <source>
        <strain>Agy99</strain>
    </source>
</reference>
<reference key="4">
    <citation type="journal article" date="2019" name="Biochemistry">
        <title>Spectroscopic and Electrochemical Characterization of the Mycofactocin Biosynthetic Protein, MftC, Provides Insight into Its Redox Flipping Mechanism.</title>
        <authorList>
            <person name="Ayikpoe R."/>
            <person name="Ngendahimana T."/>
            <person name="Langton M."/>
            <person name="Bonitatibus S."/>
            <person name="Walker L.M."/>
            <person name="Eaton S.S."/>
            <person name="Eaton G.R."/>
            <person name="Pandelia M.E."/>
            <person name="Elliott S.J."/>
            <person name="Latham J.A."/>
        </authorList>
    </citation>
    <scope>COFACTOR</scope>
    <scope>MOSSBAUER SPECTROSCOPY</scope>
    <scope>IRON-SULFUR CLUSTER BINDING SITES</scope>
    <source>
        <strain>Agy99</strain>
    </source>
</reference>
<comment type="function">
    <text evidence="3 4">Radical S-adenosylmethionine (SAM) enzyme responsible for the first step of the biosynthesis of the enzyme cofactor mycofactocin (MFT). Catalyzes two reactions at the C-terminus of the mycofactocin precursor (the MftA peptide). The first one is the oxidative decarboxylation of the C-terminal L-tyrosine of MftA, forming an unsaturated tyramine moiety (PubMed:27312813, PubMed:28634235). The second reaction is the cross-linking of the tyramine with the penultimate L-valine residue, forming a five-membered lactam ring (PubMed:28634235). Its activity requires the presence of the MftB chaperone (PubMed:27312813).</text>
</comment>
<comment type="catalytic activity">
    <reaction evidence="3 4">
        <text>[mycofactocin precursor peptide]-C-terminal glycyl-L-valyl-L-tyrosine + S-adenosyl-L-methionine = [mycofactocin precursor peptide]-C-terminal glycyl-N-{[2-(4-hydroxyphenyl)ethenyl]-3-methylbutanamide} + 5'-deoxyadenosine + L-methionine + CO2</text>
        <dbReference type="Rhea" id="RHEA:65492"/>
        <dbReference type="Rhea" id="RHEA-COMP:16815"/>
        <dbReference type="Rhea" id="RHEA-COMP:16816"/>
        <dbReference type="ChEBI" id="CHEBI:16526"/>
        <dbReference type="ChEBI" id="CHEBI:17319"/>
        <dbReference type="ChEBI" id="CHEBI:57844"/>
        <dbReference type="ChEBI" id="CHEBI:59789"/>
        <dbReference type="ChEBI" id="CHEBI:156515"/>
        <dbReference type="ChEBI" id="CHEBI:156517"/>
        <dbReference type="EC" id="1.3.98.7"/>
    </reaction>
</comment>
<comment type="catalytic activity">
    <reaction evidence="4">
        <text>[mycofactocin precursor peptide]-C-terminal glycyl-N-{[2-(4-hydroxyphenyl)ethenyl]-3-methylbutanamide} + AH2 + S-adenosyl-L-methionine = [mycofactocin precursor peptide]-C-terminal glycyl-N-{5-[(4-hydroxyphenyl)methyl]-4,4-dimethyl-2-oxopyrrolidin-3-yl}acetamide + 5'-deoxyadenosine + L-methionine + A + H(+)</text>
        <dbReference type="Rhea" id="RHEA:65500"/>
        <dbReference type="Rhea" id="RHEA-COMP:16816"/>
        <dbReference type="Rhea" id="RHEA-COMP:16818"/>
        <dbReference type="ChEBI" id="CHEBI:13193"/>
        <dbReference type="ChEBI" id="CHEBI:15378"/>
        <dbReference type="ChEBI" id="CHEBI:17319"/>
        <dbReference type="ChEBI" id="CHEBI:17499"/>
        <dbReference type="ChEBI" id="CHEBI:57844"/>
        <dbReference type="ChEBI" id="CHEBI:59789"/>
        <dbReference type="ChEBI" id="CHEBI:156517"/>
        <dbReference type="ChEBI" id="CHEBI:156518"/>
        <dbReference type="EC" id="4.1.99.26"/>
    </reaction>
</comment>
<comment type="cofactor">
    <cofactor evidence="3 5">
        <name>[4Fe-4S] cluster</name>
        <dbReference type="ChEBI" id="CHEBI:49883"/>
    </cofactor>
    <text evidence="5">Binds 3 [4Fe-4S] clusters. One cluster is coordinated with 3 cysteines and an exchangeable S-adenosyl-L-methionine. All three [Fe-S] clusters are required for MftC modification of MftA.</text>
</comment>
<comment type="subunit">
    <text evidence="3">Interacts with MftB.</text>
</comment>
<comment type="similarity">
    <text evidence="9">Belongs to the radical SAM superfamily. MftC family.</text>
</comment>
<gene>
    <name evidence="6 7" type="primary">mftC</name>
    <name evidence="12" type="ordered locus">MUL_0773</name>
</gene>
<organism>
    <name type="scientific">Mycobacterium ulcerans (strain Agy99)</name>
    <dbReference type="NCBI Taxonomy" id="362242"/>
    <lineage>
        <taxon>Bacteria</taxon>
        <taxon>Bacillati</taxon>
        <taxon>Actinomycetota</taxon>
        <taxon>Actinomycetes</taxon>
        <taxon>Mycobacteriales</taxon>
        <taxon>Mycobacteriaceae</taxon>
        <taxon>Mycobacterium</taxon>
        <taxon>Mycobacterium ulcerans group</taxon>
    </lineage>
</organism>
<evidence type="ECO:0000255" key="1">
    <source>
        <dbReference type="PROSITE-ProRule" id="PRU01266"/>
    </source>
</evidence>
<evidence type="ECO:0000256" key="2">
    <source>
        <dbReference type="SAM" id="MobiDB-lite"/>
    </source>
</evidence>
<evidence type="ECO:0000269" key="3">
    <source>
    </source>
</evidence>
<evidence type="ECO:0000269" key="4">
    <source>
    </source>
</evidence>
<evidence type="ECO:0000269" key="5">
    <source>
    </source>
</evidence>
<evidence type="ECO:0000303" key="6">
    <source>
    </source>
</evidence>
<evidence type="ECO:0000303" key="7">
    <source>
    </source>
</evidence>
<evidence type="ECO:0000303" key="8">
    <source>
    </source>
</evidence>
<evidence type="ECO:0000305" key="9"/>
<evidence type="ECO:0000305" key="10">
    <source>
    </source>
</evidence>
<evidence type="ECO:0000305" key="11">
    <source>
    </source>
</evidence>
<evidence type="ECO:0000312" key="12">
    <source>
        <dbReference type="EMBL" id="ABL03418.1"/>
    </source>
</evidence>
<sequence length="369" mass="39558">MTTAVPRLIEQFEHGLDAPICLTWELTYACNLACVHCLSSSGKRDPGELSTRQCQDIIDELERMQVFYVNIGGGEPTVRPDFWELVDYATAHHVGVKFSTNGVRINPEVAARLAASDCVDVQISLDGATAEVNDAVRGAGSFAMAVRALENLAAAGFADAKISVVVTRHNVGQLDDFAALADRYGATLRITRLRPSGRGADVWEELHPTAAQQVALYDWLVAKGERVLTGDSFFHLAPLGSSGALAGLNMCGAGRVVCLIDPVGDVYACPFAIHDRFLAGNVLTDGGFDQVWKNAPLFRQLREPQSAGACGSCGHYDSCRGGCMAAKFFTGLPLDGPDPECVQGYGAPALAQERHAPRPRVDHSRGSRE</sequence>
<accession>A0PM49</accession>
<keyword id="KW-0004">4Fe-4S</keyword>
<keyword id="KW-0408">Iron</keyword>
<keyword id="KW-0411">Iron-sulfur</keyword>
<keyword id="KW-0456">Lyase</keyword>
<keyword id="KW-0479">Metal-binding</keyword>
<keyword id="KW-0560">Oxidoreductase</keyword>
<keyword id="KW-0949">S-adenosyl-L-methionine</keyword>
<feature type="chain" id="PRO_0000452061" description="Mycofactocin maturase MftC">
    <location>
        <begin position="1"/>
        <end position="369"/>
    </location>
</feature>
<feature type="domain" description="Radical SAM core" evidence="1">
    <location>
        <begin position="16"/>
        <end position="232"/>
    </location>
</feature>
<feature type="region of interest" description="Disordered" evidence="2">
    <location>
        <begin position="347"/>
        <end position="369"/>
    </location>
</feature>
<feature type="compositionally biased region" description="Basic and acidic residues" evidence="2">
    <location>
        <begin position="352"/>
        <end position="369"/>
    </location>
</feature>
<feature type="binding site" evidence="1 11">
    <location>
        <position position="30"/>
    </location>
    <ligand>
        <name>[4Fe-4S] cluster</name>
        <dbReference type="ChEBI" id="CHEBI:49883"/>
        <label>1</label>
        <note>4Fe-4S-S-AdoMet</note>
    </ligand>
</feature>
<feature type="binding site" evidence="1 11">
    <location>
        <position position="34"/>
    </location>
    <ligand>
        <name>[4Fe-4S] cluster</name>
        <dbReference type="ChEBI" id="CHEBI:49883"/>
        <label>1</label>
        <note>4Fe-4S-S-AdoMet</note>
    </ligand>
</feature>
<feature type="binding site" evidence="1 11">
    <location>
        <position position="37"/>
    </location>
    <ligand>
        <name>[4Fe-4S] cluster</name>
        <dbReference type="ChEBI" id="CHEBI:49883"/>
        <label>1</label>
        <note>4Fe-4S-S-AdoMet</note>
    </ligand>
</feature>
<feature type="binding site" evidence="11">
    <location>
        <position position="251"/>
    </location>
    <ligand>
        <name>[4Fe-4S] cluster</name>
        <dbReference type="ChEBI" id="CHEBI:49883"/>
        <label>2</label>
    </ligand>
</feature>
<feature type="binding site" evidence="11">
    <location>
        <position position="258"/>
    </location>
    <ligand>
        <name>[4Fe-4S] cluster</name>
        <dbReference type="ChEBI" id="CHEBI:49883"/>
        <label>2</label>
    </ligand>
</feature>
<feature type="binding site" evidence="11">
    <location>
        <position position="269"/>
    </location>
    <ligand>
        <name>[4Fe-4S] cluster</name>
        <dbReference type="ChEBI" id="CHEBI:49883"/>
        <label>2</label>
    </ligand>
</feature>
<feature type="binding site" evidence="11">
    <location>
        <position position="310"/>
    </location>
    <ligand>
        <name>[4Fe-4S] cluster</name>
        <dbReference type="ChEBI" id="CHEBI:49883"/>
        <label>3</label>
    </ligand>
</feature>
<feature type="binding site" evidence="11">
    <location>
        <position position="313"/>
    </location>
    <ligand>
        <name>[4Fe-4S] cluster</name>
        <dbReference type="ChEBI" id="CHEBI:49883"/>
        <label>3</label>
    </ligand>
</feature>
<feature type="binding site" evidence="11">
    <location>
        <position position="319"/>
    </location>
    <ligand>
        <name>[4Fe-4S] cluster</name>
        <dbReference type="ChEBI" id="CHEBI:49883"/>
        <label>3</label>
    </ligand>
</feature>
<feature type="binding site" evidence="11">
    <location>
        <position position="323"/>
    </location>
    <ligand>
        <name>[4Fe-4S] cluster</name>
        <dbReference type="ChEBI" id="CHEBI:49883"/>
        <label>2</label>
    </ligand>
</feature>
<feature type="binding site" evidence="11">
    <location>
        <position position="341"/>
    </location>
    <ligand>
        <name>[4Fe-4S] cluster</name>
        <dbReference type="ChEBI" id="CHEBI:49883"/>
        <label>3</label>
    </ligand>
</feature>
<protein>
    <recommendedName>
        <fullName evidence="8">Mycofactocin maturase MftC</fullName>
    </recommendedName>
    <alternativeName>
        <fullName evidence="10">[Mycofactocin precursor peptide]-pyrrolidinone derivative synthase</fullName>
        <ecNumber evidence="4">4.1.99.26</ecNumber>
    </alternativeName>
    <alternativeName>
        <fullName>[Mycofactocin precursor peptide]-tyrosine decarboxylase</fullName>
        <ecNumber evidence="3 4">1.3.98.7</ecNumber>
    </alternativeName>
</protein>
<proteinExistence type="evidence at protein level"/>
<dbReference type="EC" id="4.1.99.26" evidence="4"/>
<dbReference type="EC" id="1.3.98.7" evidence="3 4"/>
<dbReference type="EMBL" id="CP000325">
    <property type="protein sequence ID" value="ABL03418.1"/>
    <property type="molecule type" value="Genomic_DNA"/>
</dbReference>
<dbReference type="SMR" id="A0PM49"/>
<dbReference type="KEGG" id="mul:MUL_0773"/>
<dbReference type="eggNOG" id="COG0535">
    <property type="taxonomic scope" value="Bacteria"/>
</dbReference>
<dbReference type="HOGENOM" id="CLU_009273_4_3_11"/>
<dbReference type="BioCyc" id="MetaCyc:MONOMER-21112"/>
<dbReference type="BRENDA" id="1.3.8.17">
    <property type="organism ID" value="8016"/>
</dbReference>
<dbReference type="BRENDA" id="1.3.98.7">
    <property type="organism ID" value="8016"/>
</dbReference>
<dbReference type="BRENDA" id="4.1.99.26">
    <property type="organism ID" value="8016"/>
</dbReference>
<dbReference type="Proteomes" id="UP000000765">
    <property type="component" value="Chromosome"/>
</dbReference>
<dbReference type="GO" id="GO:0051539">
    <property type="term" value="F:4 iron, 4 sulfur cluster binding"/>
    <property type="evidence" value="ECO:0007669"/>
    <property type="project" value="UniProtKB-KW"/>
</dbReference>
<dbReference type="GO" id="GO:0016829">
    <property type="term" value="F:lyase activity"/>
    <property type="evidence" value="ECO:0007669"/>
    <property type="project" value="UniProtKB-KW"/>
</dbReference>
<dbReference type="GO" id="GO:0046872">
    <property type="term" value="F:metal ion binding"/>
    <property type="evidence" value="ECO:0007669"/>
    <property type="project" value="UniProtKB-KW"/>
</dbReference>
<dbReference type="GO" id="GO:0016491">
    <property type="term" value="F:oxidoreductase activity"/>
    <property type="evidence" value="ECO:0007669"/>
    <property type="project" value="UniProtKB-KW"/>
</dbReference>
<dbReference type="CDD" id="cd01335">
    <property type="entry name" value="Radical_SAM"/>
    <property type="match status" value="1"/>
</dbReference>
<dbReference type="CDD" id="cd21123">
    <property type="entry name" value="SPASM_MftC-like"/>
    <property type="match status" value="1"/>
</dbReference>
<dbReference type="FunFam" id="3.20.20.70:FF:000188">
    <property type="entry name" value="Mycofactocin radical SAM maturase MftC"/>
    <property type="match status" value="1"/>
</dbReference>
<dbReference type="Gene3D" id="3.20.20.70">
    <property type="entry name" value="Aldolase class I"/>
    <property type="match status" value="1"/>
</dbReference>
<dbReference type="InterPro" id="IPR023885">
    <property type="entry name" value="4Fe4S-binding_SPASM_dom"/>
</dbReference>
<dbReference type="InterPro" id="IPR013785">
    <property type="entry name" value="Aldolase_TIM"/>
</dbReference>
<dbReference type="InterPro" id="IPR006638">
    <property type="entry name" value="Elp3/MiaA/NifB-like_rSAM"/>
</dbReference>
<dbReference type="InterPro" id="IPR023913">
    <property type="entry name" value="MftC"/>
</dbReference>
<dbReference type="InterPro" id="IPR017200">
    <property type="entry name" value="PqqE-like"/>
</dbReference>
<dbReference type="InterPro" id="IPR050377">
    <property type="entry name" value="Radical_SAM_PqqE_MftC-like"/>
</dbReference>
<dbReference type="InterPro" id="IPR007197">
    <property type="entry name" value="rSAM"/>
</dbReference>
<dbReference type="NCBIfam" id="TIGR03962">
    <property type="entry name" value="mycofact_rSAM"/>
    <property type="match status" value="1"/>
</dbReference>
<dbReference type="NCBIfam" id="TIGR04085">
    <property type="entry name" value="rSAM_more_4Fe4S"/>
    <property type="match status" value="1"/>
</dbReference>
<dbReference type="PANTHER" id="PTHR11228:SF7">
    <property type="entry name" value="PQQA PEPTIDE CYCLASE"/>
    <property type="match status" value="1"/>
</dbReference>
<dbReference type="PANTHER" id="PTHR11228">
    <property type="entry name" value="RADICAL SAM DOMAIN PROTEIN"/>
    <property type="match status" value="1"/>
</dbReference>
<dbReference type="Pfam" id="PF04055">
    <property type="entry name" value="Radical_SAM"/>
    <property type="match status" value="1"/>
</dbReference>
<dbReference type="Pfam" id="PF13186">
    <property type="entry name" value="SPASM"/>
    <property type="match status" value="1"/>
</dbReference>
<dbReference type="PIRSF" id="PIRSF037420">
    <property type="entry name" value="PQQ_syn_pqqE"/>
    <property type="match status" value="1"/>
</dbReference>
<dbReference type="SFLD" id="SFLDF00316">
    <property type="entry name" value="C-terminal_tyrosine_decarboxyl"/>
    <property type="match status" value="1"/>
</dbReference>
<dbReference type="SFLD" id="SFLDG01383">
    <property type="entry name" value="cyclic_pyranopterin_phosphate"/>
    <property type="match status" value="1"/>
</dbReference>
<dbReference type="SMART" id="SM00729">
    <property type="entry name" value="Elp3"/>
    <property type="match status" value="1"/>
</dbReference>
<dbReference type="SUPFAM" id="SSF102114">
    <property type="entry name" value="Radical SAM enzymes"/>
    <property type="match status" value="1"/>
</dbReference>
<dbReference type="PROSITE" id="PS51918">
    <property type="entry name" value="RADICAL_SAM"/>
    <property type="match status" value="1"/>
</dbReference>
<name>MFTC_MYCUA</name>